<feature type="chain" id="PRO_0000124491" description="Small ribosomal subunit protein uS7c">
    <location>
        <begin position="1"/>
        <end position="155"/>
    </location>
</feature>
<geneLocation type="chloroplast"/>
<reference key="1">
    <citation type="journal article" date="1994" name="Proc. Natl. Acad. Sci. U.S.A.">
        <title>Loss of all ndh genes as determined by sequencing the entire chloroplast genome of the black pine Pinus thunbergii.</title>
        <authorList>
            <person name="Wakasugi T."/>
            <person name="Tsudzuki J."/>
            <person name="Ito S."/>
            <person name="Nakashima K."/>
            <person name="Tsudzuki T."/>
            <person name="Sugiura M."/>
        </authorList>
    </citation>
    <scope>NUCLEOTIDE SEQUENCE [LARGE SCALE GENOMIC DNA]</scope>
</reference>
<evidence type="ECO:0000250" key="1"/>
<evidence type="ECO:0000305" key="2"/>
<organism>
    <name type="scientific">Pinus thunbergii</name>
    <name type="common">Japanese black pine</name>
    <name type="synonym">Pinus thunbergiana</name>
    <dbReference type="NCBI Taxonomy" id="3350"/>
    <lineage>
        <taxon>Eukaryota</taxon>
        <taxon>Viridiplantae</taxon>
        <taxon>Streptophyta</taxon>
        <taxon>Embryophyta</taxon>
        <taxon>Tracheophyta</taxon>
        <taxon>Spermatophyta</taxon>
        <taxon>Pinopsida</taxon>
        <taxon>Pinidae</taxon>
        <taxon>Conifers I</taxon>
        <taxon>Pinales</taxon>
        <taxon>Pinaceae</taxon>
        <taxon>Pinus</taxon>
        <taxon>Pinus subgen. Pinus</taxon>
    </lineage>
</organism>
<protein>
    <recommendedName>
        <fullName evidence="2">Small ribosomal subunit protein uS7c</fullName>
    </recommendedName>
    <alternativeName>
        <fullName>30S ribosomal protein S7, chloroplastic</fullName>
    </alternativeName>
</protein>
<keyword id="KW-0150">Chloroplast</keyword>
<keyword id="KW-0934">Plastid</keyword>
<keyword id="KW-0687">Ribonucleoprotein</keyword>
<keyword id="KW-0689">Ribosomal protein</keyword>
<keyword id="KW-0694">RNA-binding</keyword>
<keyword id="KW-0699">rRNA-binding</keyword>
<dbReference type="EMBL" id="D17510">
    <property type="protein sequence ID" value="BAA04458.1"/>
    <property type="molecule type" value="Genomic_DNA"/>
</dbReference>
<dbReference type="PIR" id="T07582">
    <property type="entry name" value="T07582"/>
</dbReference>
<dbReference type="RefSeq" id="NP_042503.1">
    <property type="nucleotide sequence ID" value="NC_001631.1"/>
</dbReference>
<dbReference type="SMR" id="P41652"/>
<dbReference type="GeneID" id="809070"/>
<dbReference type="GO" id="GO:0009507">
    <property type="term" value="C:chloroplast"/>
    <property type="evidence" value="ECO:0007669"/>
    <property type="project" value="UniProtKB-SubCell"/>
</dbReference>
<dbReference type="GO" id="GO:0015935">
    <property type="term" value="C:small ribosomal subunit"/>
    <property type="evidence" value="ECO:0007669"/>
    <property type="project" value="InterPro"/>
</dbReference>
<dbReference type="GO" id="GO:0019843">
    <property type="term" value="F:rRNA binding"/>
    <property type="evidence" value="ECO:0007669"/>
    <property type="project" value="UniProtKB-UniRule"/>
</dbReference>
<dbReference type="GO" id="GO:0003735">
    <property type="term" value="F:structural constituent of ribosome"/>
    <property type="evidence" value="ECO:0007669"/>
    <property type="project" value="InterPro"/>
</dbReference>
<dbReference type="GO" id="GO:0006412">
    <property type="term" value="P:translation"/>
    <property type="evidence" value="ECO:0007669"/>
    <property type="project" value="UniProtKB-UniRule"/>
</dbReference>
<dbReference type="CDD" id="cd14871">
    <property type="entry name" value="uS7_Chloroplast"/>
    <property type="match status" value="1"/>
</dbReference>
<dbReference type="FunFam" id="1.10.455.10:FF:000001">
    <property type="entry name" value="30S ribosomal protein S7"/>
    <property type="match status" value="1"/>
</dbReference>
<dbReference type="Gene3D" id="1.10.455.10">
    <property type="entry name" value="Ribosomal protein S7 domain"/>
    <property type="match status" value="1"/>
</dbReference>
<dbReference type="HAMAP" id="MF_00480_B">
    <property type="entry name" value="Ribosomal_uS7_B"/>
    <property type="match status" value="1"/>
</dbReference>
<dbReference type="InterPro" id="IPR000235">
    <property type="entry name" value="Ribosomal_uS7"/>
</dbReference>
<dbReference type="InterPro" id="IPR005717">
    <property type="entry name" value="Ribosomal_uS7_bac/org-type"/>
</dbReference>
<dbReference type="InterPro" id="IPR020606">
    <property type="entry name" value="Ribosomal_uS7_CS"/>
</dbReference>
<dbReference type="InterPro" id="IPR023798">
    <property type="entry name" value="Ribosomal_uS7_dom"/>
</dbReference>
<dbReference type="InterPro" id="IPR036823">
    <property type="entry name" value="Ribosomal_uS7_dom_sf"/>
</dbReference>
<dbReference type="NCBIfam" id="TIGR01029">
    <property type="entry name" value="rpsG_bact"/>
    <property type="match status" value="1"/>
</dbReference>
<dbReference type="PANTHER" id="PTHR11205">
    <property type="entry name" value="RIBOSOMAL PROTEIN S7"/>
    <property type="match status" value="1"/>
</dbReference>
<dbReference type="Pfam" id="PF00177">
    <property type="entry name" value="Ribosomal_S7"/>
    <property type="match status" value="1"/>
</dbReference>
<dbReference type="PIRSF" id="PIRSF002122">
    <property type="entry name" value="RPS7p_RPS7a_RPS5e_RPS7o"/>
    <property type="match status" value="1"/>
</dbReference>
<dbReference type="SUPFAM" id="SSF47973">
    <property type="entry name" value="Ribosomal protein S7"/>
    <property type="match status" value="1"/>
</dbReference>
<dbReference type="PROSITE" id="PS00052">
    <property type="entry name" value="RIBOSOMAL_S7"/>
    <property type="match status" value="1"/>
</dbReference>
<gene>
    <name type="primary">rps7</name>
</gene>
<proteinExistence type="inferred from homology"/>
<accession>P41652</accession>
<name>RR7_PINTH</name>
<comment type="function">
    <text evidence="1">One of the primary rRNA binding proteins, it binds directly to 16S rRNA where it nucleates assembly of the head domain of the 30S subunit.</text>
</comment>
<comment type="subunit">
    <text>Part of the 30S ribosomal subunit.</text>
</comment>
<comment type="subcellular location">
    <subcellularLocation>
        <location>Plastid</location>
        <location>Chloroplast</location>
    </subcellularLocation>
</comment>
<comment type="similarity">
    <text evidence="2">Belongs to the universal ribosomal protein uS7 family.</text>
</comment>
<sequence>MSRRSTAEKKTAKSDPIYHNRLVNMVVNRILKNGKKSLAYRILYRAIKKIQQKTDKNPLSVLRQAIRRVTPNVTVKARRVGGSTYRVPTEIRSTQGKVLAIRWLLGASRKRPGRNMNFKLSHELMDAARGNGNAIRKKEETHRMAEANRAFAHFR</sequence>